<keyword id="KW-0963">Cytoplasm</keyword>
<keyword id="KW-0489">Methyltransferase</keyword>
<keyword id="KW-1185">Reference proteome</keyword>
<keyword id="KW-0698">rRNA processing</keyword>
<keyword id="KW-0949">S-adenosyl-L-methionine</keyword>
<keyword id="KW-0808">Transferase</keyword>
<dbReference type="EC" id="2.1.1.177" evidence="1"/>
<dbReference type="EMBL" id="CP001043">
    <property type="protein sequence ID" value="ACC71247.1"/>
    <property type="molecule type" value="Genomic_DNA"/>
</dbReference>
<dbReference type="RefSeq" id="WP_012401453.1">
    <property type="nucleotide sequence ID" value="NC_010622.1"/>
</dbReference>
<dbReference type="SMR" id="B2JE39"/>
<dbReference type="STRING" id="391038.Bphy_2069"/>
<dbReference type="KEGG" id="bph:Bphy_2069"/>
<dbReference type="eggNOG" id="COG1576">
    <property type="taxonomic scope" value="Bacteria"/>
</dbReference>
<dbReference type="HOGENOM" id="CLU_100552_1_0_4"/>
<dbReference type="OrthoDB" id="9806643at2"/>
<dbReference type="Proteomes" id="UP000001192">
    <property type="component" value="Chromosome 1"/>
</dbReference>
<dbReference type="GO" id="GO:0005737">
    <property type="term" value="C:cytoplasm"/>
    <property type="evidence" value="ECO:0007669"/>
    <property type="project" value="UniProtKB-SubCell"/>
</dbReference>
<dbReference type="GO" id="GO:0070038">
    <property type="term" value="F:rRNA (pseudouridine-N3-)-methyltransferase activity"/>
    <property type="evidence" value="ECO:0007669"/>
    <property type="project" value="UniProtKB-UniRule"/>
</dbReference>
<dbReference type="CDD" id="cd18081">
    <property type="entry name" value="RlmH-like"/>
    <property type="match status" value="1"/>
</dbReference>
<dbReference type="Gene3D" id="3.40.1280.10">
    <property type="match status" value="1"/>
</dbReference>
<dbReference type="HAMAP" id="MF_00658">
    <property type="entry name" value="23SrRNA_methyltr_H"/>
    <property type="match status" value="1"/>
</dbReference>
<dbReference type="InterPro" id="IPR029028">
    <property type="entry name" value="Alpha/beta_knot_MTases"/>
</dbReference>
<dbReference type="InterPro" id="IPR003742">
    <property type="entry name" value="RlmH-like"/>
</dbReference>
<dbReference type="InterPro" id="IPR029026">
    <property type="entry name" value="tRNA_m1G_MTases_N"/>
</dbReference>
<dbReference type="NCBIfam" id="NF000986">
    <property type="entry name" value="PRK00103.1-4"/>
    <property type="match status" value="1"/>
</dbReference>
<dbReference type="NCBIfam" id="TIGR00246">
    <property type="entry name" value="tRNA_RlmH_YbeA"/>
    <property type="match status" value="1"/>
</dbReference>
<dbReference type="PANTHER" id="PTHR33603">
    <property type="entry name" value="METHYLTRANSFERASE"/>
    <property type="match status" value="1"/>
</dbReference>
<dbReference type="PANTHER" id="PTHR33603:SF1">
    <property type="entry name" value="RIBOSOMAL RNA LARGE SUBUNIT METHYLTRANSFERASE H"/>
    <property type="match status" value="1"/>
</dbReference>
<dbReference type="Pfam" id="PF02590">
    <property type="entry name" value="SPOUT_MTase"/>
    <property type="match status" value="1"/>
</dbReference>
<dbReference type="PIRSF" id="PIRSF004505">
    <property type="entry name" value="MT_bac"/>
    <property type="match status" value="1"/>
</dbReference>
<dbReference type="SUPFAM" id="SSF75217">
    <property type="entry name" value="alpha/beta knot"/>
    <property type="match status" value="1"/>
</dbReference>
<protein>
    <recommendedName>
        <fullName evidence="1">Ribosomal RNA large subunit methyltransferase H</fullName>
        <ecNumber evidence="1">2.1.1.177</ecNumber>
    </recommendedName>
    <alternativeName>
        <fullName evidence="1">23S rRNA (pseudouridine1915-N3)-methyltransferase</fullName>
    </alternativeName>
    <alternativeName>
        <fullName evidence="1">23S rRNA m3Psi1915 methyltransferase</fullName>
    </alternativeName>
    <alternativeName>
        <fullName evidence="1">rRNA (pseudouridine-N3-)-methyltransferase RlmH</fullName>
    </alternativeName>
</protein>
<accession>B2JE39</accession>
<comment type="function">
    <text evidence="1">Specifically methylates the pseudouridine at position 1915 (m3Psi1915) in 23S rRNA.</text>
</comment>
<comment type="catalytic activity">
    <reaction evidence="1">
        <text>pseudouridine(1915) in 23S rRNA + S-adenosyl-L-methionine = N(3)-methylpseudouridine(1915) in 23S rRNA + S-adenosyl-L-homocysteine + H(+)</text>
        <dbReference type="Rhea" id="RHEA:42752"/>
        <dbReference type="Rhea" id="RHEA-COMP:10221"/>
        <dbReference type="Rhea" id="RHEA-COMP:10222"/>
        <dbReference type="ChEBI" id="CHEBI:15378"/>
        <dbReference type="ChEBI" id="CHEBI:57856"/>
        <dbReference type="ChEBI" id="CHEBI:59789"/>
        <dbReference type="ChEBI" id="CHEBI:65314"/>
        <dbReference type="ChEBI" id="CHEBI:74486"/>
        <dbReference type="EC" id="2.1.1.177"/>
    </reaction>
</comment>
<comment type="subunit">
    <text evidence="1">Homodimer.</text>
</comment>
<comment type="subcellular location">
    <subcellularLocation>
        <location evidence="1">Cytoplasm</location>
    </subcellularLocation>
</comment>
<comment type="similarity">
    <text evidence="1">Belongs to the RNA methyltransferase RlmH family.</text>
</comment>
<gene>
    <name evidence="1" type="primary">rlmH</name>
    <name type="ordered locus">Bphy_2069</name>
</gene>
<evidence type="ECO:0000255" key="1">
    <source>
        <dbReference type="HAMAP-Rule" id="MF_00658"/>
    </source>
</evidence>
<reference key="1">
    <citation type="journal article" date="2014" name="Stand. Genomic Sci.">
        <title>Complete genome sequence of Burkholderia phymatum STM815(T), a broad host range and efficient nitrogen-fixing symbiont of Mimosa species.</title>
        <authorList>
            <person name="Moulin L."/>
            <person name="Klonowska A."/>
            <person name="Caroline B."/>
            <person name="Booth K."/>
            <person name="Vriezen J.A."/>
            <person name="Melkonian R."/>
            <person name="James E.K."/>
            <person name="Young J.P."/>
            <person name="Bena G."/>
            <person name="Hauser L."/>
            <person name="Land M."/>
            <person name="Kyrpides N."/>
            <person name="Bruce D."/>
            <person name="Chain P."/>
            <person name="Copeland A."/>
            <person name="Pitluck S."/>
            <person name="Woyke T."/>
            <person name="Lizotte-Waniewski M."/>
            <person name="Bristow J."/>
            <person name="Riley M."/>
        </authorList>
    </citation>
    <scope>NUCLEOTIDE SEQUENCE [LARGE SCALE GENOMIC DNA]</scope>
    <source>
        <strain>DSM 17167 / CIP 108236 / LMG 21445 / STM815</strain>
    </source>
</reference>
<sequence length="156" mass="17734">MKLHILAVGHKMPDWIATGFDEYAKRMPPELRIELREIKPEQRSSGRSAESVMASERQKIEAALPRNARIVALDERGKDWTTMQLANALPTWQQDGRDVAFLIGGADGLDPDLKARADMLLRVSSLTLPHAMVRVLLAEQLYRAWTITQNHPYHRV</sequence>
<feature type="chain" id="PRO_0000366573" description="Ribosomal RNA large subunit methyltransferase H">
    <location>
        <begin position="1"/>
        <end position="156"/>
    </location>
</feature>
<feature type="binding site" evidence="1">
    <location>
        <position position="73"/>
    </location>
    <ligand>
        <name>S-adenosyl-L-methionine</name>
        <dbReference type="ChEBI" id="CHEBI:59789"/>
    </ligand>
</feature>
<feature type="binding site" evidence="1">
    <location>
        <position position="104"/>
    </location>
    <ligand>
        <name>S-adenosyl-L-methionine</name>
        <dbReference type="ChEBI" id="CHEBI:59789"/>
    </ligand>
</feature>
<feature type="binding site" evidence="1">
    <location>
        <begin position="123"/>
        <end position="128"/>
    </location>
    <ligand>
        <name>S-adenosyl-L-methionine</name>
        <dbReference type="ChEBI" id="CHEBI:59789"/>
    </ligand>
</feature>
<name>RLMH_PARP8</name>
<proteinExistence type="inferred from homology"/>
<organism>
    <name type="scientific">Paraburkholderia phymatum (strain DSM 17167 / CIP 108236 / LMG 21445 / STM815)</name>
    <name type="common">Burkholderia phymatum</name>
    <dbReference type="NCBI Taxonomy" id="391038"/>
    <lineage>
        <taxon>Bacteria</taxon>
        <taxon>Pseudomonadati</taxon>
        <taxon>Pseudomonadota</taxon>
        <taxon>Betaproteobacteria</taxon>
        <taxon>Burkholderiales</taxon>
        <taxon>Burkholderiaceae</taxon>
        <taxon>Paraburkholderia</taxon>
    </lineage>
</organism>